<reference key="1">
    <citation type="journal article" date="2007" name="Mol. Phylogenet. Evol.">
        <title>Phylogenetic and evolutionary implications of complete chloroplast genome sequences of four early-diverging angiosperms: Buxus (Buxaceae), Chloranthus (Chloranthaceae), Dioscorea (Dioscoreaceae), and Illicium (Schisandraceae).</title>
        <authorList>
            <person name="Hansen D.R."/>
            <person name="Dastidar S.G."/>
            <person name="Cai Z."/>
            <person name="Penaflor C."/>
            <person name="Kuehl J.V."/>
            <person name="Boore J.L."/>
            <person name="Jansen R.K."/>
        </authorList>
    </citation>
    <scope>NUCLEOTIDE SEQUENCE [LARGE SCALE GENOMIC DNA]</scope>
</reference>
<proteinExistence type="inferred from homology"/>
<accession>A6MMG3</accession>
<comment type="function">
    <text evidence="1">Protein S19 forms a complex with S13 that binds strongly to the 16S ribosomal RNA.</text>
</comment>
<comment type="subcellular location">
    <subcellularLocation>
        <location>Plastid</location>
        <location>Chloroplast</location>
    </subcellularLocation>
</comment>
<comment type="similarity">
    <text evidence="1">Belongs to the universal ribosomal protein uS19 family.</text>
</comment>
<feature type="chain" id="PRO_0000354341" description="Small ribosomal subunit protein uS19c">
    <location>
        <begin position="1"/>
        <end position="92"/>
    </location>
</feature>
<geneLocation type="chloroplast"/>
<dbReference type="EMBL" id="EF380352">
    <property type="protein sequence ID" value="ABQ43300.1"/>
    <property type="molecule type" value="Genomic_DNA"/>
</dbReference>
<dbReference type="RefSeq" id="YP_001294139.1">
    <property type="nucleotide sequence ID" value="NC_009598.1"/>
</dbReference>
<dbReference type="SMR" id="A6MMG3"/>
<dbReference type="GeneID" id="5236472"/>
<dbReference type="GO" id="GO:0009507">
    <property type="term" value="C:chloroplast"/>
    <property type="evidence" value="ECO:0007669"/>
    <property type="project" value="UniProtKB-SubCell"/>
</dbReference>
<dbReference type="GO" id="GO:0005763">
    <property type="term" value="C:mitochondrial small ribosomal subunit"/>
    <property type="evidence" value="ECO:0007669"/>
    <property type="project" value="TreeGrafter"/>
</dbReference>
<dbReference type="GO" id="GO:0019843">
    <property type="term" value="F:rRNA binding"/>
    <property type="evidence" value="ECO:0007669"/>
    <property type="project" value="UniProtKB-UniRule"/>
</dbReference>
<dbReference type="GO" id="GO:0003735">
    <property type="term" value="F:structural constituent of ribosome"/>
    <property type="evidence" value="ECO:0007669"/>
    <property type="project" value="InterPro"/>
</dbReference>
<dbReference type="GO" id="GO:0000028">
    <property type="term" value="P:ribosomal small subunit assembly"/>
    <property type="evidence" value="ECO:0007669"/>
    <property type="project" value="TreeGrafter"/>
</dbReference>
<dbReference type="GO" id="GO:0006412">
    <property type="term" value="P:translation"/>
    <property type="evidence" value="ECO:0007669"/>
    <property type="project" value="UniProtKB-UniRule"/>
</dbReference>
<dbReference type="FunFam" id="3.30.860.10:FF:000001">
    <property type="entry name" value="30S ribosomal protein S19"/>
    <property type="match status" value="1"/>
</dbReference>
<dbReference type="Gene3D" id="3.30.860.10">
    <property type="entry name" value="30s Ribosomal Protein S19, Chain A"/>
    <property type="match status" value="1"/>
</dbReference>
<dbReference type="HAMAP" id="MF_00531">
    <property type="entry name" value="Ribosomal_uS19"/>
    <property type="match status" value="1"/>
</dbReference>
<dbReference type="InterPro" id="IPR002222">
    <property type="entry name" value="Ribosomal_uS19"/>
</dbReference>
<dbReference type="InterPro" id="IPR005732">
    <property type="entry name" value="Ribosomal_uS19_bac-type"/>
</dbReference>
<dbReference type="InterPro" id="IPR020934">
    <property type="entry name" value="Ribosomal_uS19_CS"/>
</dbReference>
<dbReference type="InterPro" id="IPR023575">
    <property type="entry name" value="Ribosomal_uS19_SF"/>
</dbReference>
<dbReference type="NCBIfam" id="TIGR01050">
    <property type="entry name" value="rpsS_bact"/>
    <property type="match status" value="1"/>
</dbReference>
<dbReference type="PANTHER" id="PTHR11880">
    <property type="entry name" value="RIBOSOMAL PROTEIN S19P FAMILY MEMBER"/>
    <property type="match status" value="1"/>
</dbReference>
<dbReference type="PANTHER" id="PTHR11880:SF8">
    <property type="entry name" value="SMALL RIBOSOMAL SUBUNIT PROTEIN US19M"/>
    <property type="match status" value="1"/>
</dbReference>
<dbReference type="Pfam" id="PF00203">
    <property type="entry name" value="Ribosomal_S19"/>
    <property type="match status" value="1"/>
</dbReference>
<dbReference type="PIRSF" id="PIRSF002144">
    <property type="entry name" value="Ribosomal_S19"/>
    <property type="match status" value="1"/>
</dbReference>
<dbReference type="PRINTS" id="PR00975">
    <property type="entry name" value="RIBOSOMALS19"/>
</dbReference>
<dbReference type="SUPFAM" id="SSF54570">
    <property type="entry name" value="Ribosomal protein S19"/>
    <property type="match status" value="1"/>
</dbReference>
<dbReference type="PROSITE" id="PS00323">
    <property type="entry name" value="RIBOSOMAL_S19"/>
    <property type="match status" value="1"/>
</dbReference>
<gene>
    <name evidence="1" type="primary">rps19</name>
</gene>
<keyword id="KW-0150">Chloroplast</keyword>
<keyword id="KW-0934">Plastid</keyword>
<keyword id="KW-0687">Ribonucleoprotein</keyword>
<keyword id="KW-0689">Ribosomal protein</keyword>
<keyword id="KW-0694">RNA-binding</keyword>
<keyword id="KW-0699">rRNA-binding</keyword>
<protein>
    <recommendedName>
        <fullName evidence="1">Small ribosomal subunit protein uS19c</fullName>
    </recommendedName>
    <alternativeName>
        <fullName evidence="2">30S ribosomal protein S19, chloroplastic</fullName>
    </alternativeName>
</protein>
<evidence type="ECO:0000255" key="1">
    <source>
        <dbReference type="HAMAP-Rule" id="MF_00531"/>
    </source>
</evidence>
<evidence type="ECO:0000305" key="2"/>
<organism>
    <name type="scientific">Chloranthus spicatus</name>
    <name type="common">Chulantree</name>
    <name type="synonym">Nigrina spicata</name>
    <dbReference type="NCBI Taxonomy" id="13006"/>
    <lineage>
        <taxon>Eukaryota</taxon>
        <taxon>Viridiplantae</taxon>
        <taxon>Streptophyta</taxon>
        <taxon>Embryophyta</taxon>
        <taxon>Tracheophyta</taxon>
        <taxon>Spermatophyta</taxon>
        <taxon>Magnoliopsida</taxon>
        <taxon>Chloranthales</taxon>
        <taxon>Chloranthaceae</taxon>
        <taxon>Chloranthus</taxon>
    </lineage>
</organism>
<name>RR19_CHLSC</name>
<sequence length="92" mass="10714">MTRSLKKNPFVANHLLEKVEKLNMREEKKIIVTWSRSSTIIPTMIGHTIAIHNGREHLPIYITDRMVGHKLGEFAPTLTFRGHARNDNRSRR</sequence>